<gene>
    <name evidence="1" type="primary">ctaB</name>
    <name type="ordered locus">Bcep18194_A6167</name>
</gene>
<name>COXX_BURL3</name>
<keyword id="KW-0997">Cell inner membrane</keyword>
<keyword id="KW-1003">Cell membrane</keyword>
<keyword id="KW-0350">Heme biosynthesis</keyword>
<keyword id="KW-0472">Membrane</keyword>
<keyword id="KW-0808">Transferase</keyword>
<keyword id="KW-0812">Transmembrane</keyword>
<keyword id="KW-1133">Transmembrane helix</keyword>
<accession>Q39CQ5</accession>
<protein>
    <recommendedName>
        <fullName evidence="1">Protoheme IX farnesyltransferase</fullName>
        <ecNumber evidence="1">2.5.1.141</ecNumber>
    </recommendedName>
    <alternativeName>
        <fullName evidence="1">Heme B farnesyltransferase</fullName>
    </alternativeName>
    <alternativeName>
        <fullName evidence="1">Heme O synthase</fullName>
    </alternativeName>
</protein>
<sequence length="300" mass="32976">MQSTLSQSPGSRFSQYMALTKPRVTQLAVFCAVIGMFLATPGMVPWHVLIGGTVGIWLLAGAAFAINCLVEQKIDAMMRRTAWRPSARGEITTPQILIFSAVLGSVGAWTLYTFTNPLTMWLTIATFVGYAVIYTLLLKPMTPQNIVIGGASGAMPPALGWAAVTGAVPGDAWILVLIIFVWTPPHFWVLALYRRKDYENAGLPMLPVTHGEKFTRLHILLYTVILFAVTLMPFISGMSGAVYLTSAVLLGAVFLAYAWKIHRDYSDELARKAFRYSIVYLSLLFAALLVDHYARPLLGV</sequence>
<evidence type="ECO:0000255" key="1">
    <source>
        <dbReference type="HAMAP-Rule" id="MF_00154"/>
    </source>
</evidence>
<feature type="chain" id="PRO_0000327032" description="Protoheme IX farnesyltransferase">
    <location>
        <begin position="1"/>
        <end position="300"/>
    </location>
</feature>
<feature type="transmembrane region" description="Helical" evidence="1">
    <location>
        <begin position="24"/>
        <end position="44"/>
    </location>
</feature>
<feature type="transmembrane region" description="Helical" evidence="1">
    <location>
        <begin position="46"/>
        <end position="66"/>
    </location>
</feature>
<feature type="transmembrane region" description="Helical" evidence="1">
    <location>
        <begin position="94"/>
        <end position="114"/>
    </location>
</feature>
<feature type="transmembrane region" description="Helical" evidence="1">
    <location>
        <begin position="118"/>
        <end position="138"/>
    </location>
</feature>
<feature type="transmembrane region" description="Helical" evidence="1">
    <location>
        <begin position="146"/>
        <end position="166"/>
    </location>
</feature>
<feature type="transmembrane region" description="Helical" evidence="1">
    <location>
        <begin position="172"/>
        <end position="192"/>
    </location>
</feature>
<feature type="transmembrane region" description="Helical" evidence="1">
    <location>
        <begin position="217"/>
        <end position="237"/>
    </location>
</feature>
<feature type="transmembrane region" description="Helical" evidence="1">
    <location>
        <begin position="239"/>
        <end position="259"/>
    </location>
</feature>
<feature type="transmembrane region" description="Helical" evidence="1">
    <location>
        <begin position="278"/>
        <end position="298"/>
    </location>
</feature>
<reference key="1">
    <citation type="submission" date="2005-10" db="EMBL/GenBank/DDBJ databases">
        <title>Complete sequence of chromosome 1 of Burkholderia sp. 383.</title>
        <authorList>
            <consortium name="US DOE Joint Genome Institute"/>
            <person name="Copeland A."/>
            <person name="Lucas S."/>
            <person name="Lapidus A."/>
            <person name="Barry K."/>
            <person name="Detter J.C."/>
            <person name="Glavina T."/>
            <person name="Hammon N."/>
            <person name="Israni S."/>
            <person name="Pitluck S."/>
            <person name="Chain P."/>
            <person name="Malfatti S."/>
            <person name="Shin M."/>
            <person name="Vergez L."/>
            <person name="Schmutz J."/>
            <person name="Larimer F."/>
            <person name="Land M."/>
            <person name="Kyrpides N."/>
            <person name="Lykidis A."/>
            <person name="Richardson P."/>
        </authorList>
    </citation>
    <scope>NUCLEOTIDE SEQUENCE [LARGE SCALE GENOMIC DNA]</scope>
    <source>
        <strain>ATCC 17760 / DSM 23089 / LMG 22485 / NCIMB 9086 / R18194 / 383</strain>
    </source>
</reference>
<proteinExistence type="inferred from homology"/>
<comment type="function">
    <text evidence="1">Converts heme B (protoheme IX) to heme O by substitution of the vinyl group on carbon 2 of heme B porphyrin ring with a hydroxyethyl farnesyl side group.</text>
</comment>
<comment type="catalytic activity">
    <reaction evidence="1">
        <text>heme b + (2E,6E)-farnesyl diphosphate + H2O = Fe(II)-heme o + diphosphate</text>
        <dbReference type="Rhea" id="RHEA:28070"/>
        <dbReference type="ChEBI" id="CHEBI:15377"/>
        <dbReference type="ChEBI" id="CHEBI:33019"/>
        <dbReference type="ChEBI" id="CHEBI:60344"/>
        <dbReference type="ChEBI" id="CHEBI:60530"/>
        <dbReference type="ChEBI" id="CHEBI:175763"/>
        <dbReference type="EC" id="2.5.1.141"/>
    </reaction>
</comment>
<comment type="pathway">
    <text evidence="1">Porphyrin-containing compound metabolism; heme O biosynthesis; heme O from protoheme: step 1/1.</text>
</comment>
<comment type="subcellular location">
    <subcellularLocation>
        <location evidence="1">Cell inner membrane</location>
        <topology evidence="1">Multi-pass membrane protein</topology>
    </subcellularLocation>
</comment>
<comment type="miscellaneous">
    <text evidence="1">Carbon 2 of the heme B porphyrin ring is defined according to the Fischer nomenclature.</text>
</comment>
<comment type="similarity">
    <text evidence="1">Belongs to the UbiA prenyltransferase family. Protoheme IX farnesyltransferase subfamily.</text>
</comment>
<organism>
    <name type="scientific">Burkholderia lata (strain ATCC 17760 / DSM 23089 / LMG 22485 / NCIMB 9086 / R18194 / 383)</name>
    <dbReference type="NCBI Taxonomy" id="482957"/>
    <lineage>
        <taxon>Bacteria</taxon>
        <taxon>Pseudomonadati</taxon>
        <taxon>Pseudomonadota</taxon>
        <taxon>Betaproteobacteria</taxon>
        <taxon>Burkholderiales</taxon>
        <taxon>Burkholderiaceae</taxon>
        <taxon>Burkholderia</taxon>
        <taxon>Burkholderia cepacia complex</taxon>
    </lineage>
</organism>
<dbReference type="EC" id="2.5.1.141" evidence="1"/>
<dbReference type="EMBL" id="CP000151">
    <property type="protein sequence ID" value="ABB09761.1"/>
    <property type="molecule type" value="Genomic_DNA"/>
</dbReference>
<dbReference type="SMR" id="Q39CQ5"/>
<dbReference type="KEGG" id="bur:Bcep18194_A6167"/>
<dbReference type="PATRIC" id="fig|482957.22.peg.3177"/>
<dbReference type="HOGENOM" id="CLU_029631_0_2_4"/>
<dbReference type="UniPathway" id="UPA00834">
    <property type="reaction ID" value="UER00712"/>
</dbReference>
<dbReference type="Proteomes" id="UP000002705">
    <property type="component" value="Chromosome 1"/>
</dbReference>
<dbReference type="GO" id="GO:0005886">
    <property type="term" value="C:plasma membrane"/>
    <property type="evidence" value="ECO:0007669"/>
    <property type="project" value="UniProtKB-SubCell"/>
</dbReference>
<dbReference type="GO" id="GO:0008495">
    <property type="term" value="F:protoheme IX farnesyltransferase activity"/>
    <property type="evidence" value="ECO:0007669"/>
    <property type="project" value="UniProtKB-UniRule"/>
</dbReference>
<dbReference type="GO" id="GO:0048034">
    <property type="term" value="P:heme O biosynthetic process"/>
    <property type="evidence" value="ECO:0007669"/>
    <property type="project" value="UniProtKB-UniRule"/>
</dbReference>
<dbReference type="CDD" id="cd13957">
    <property type="entry name" value="PT_UbiA_Cox10"/>
    <property type="match status" value="1"/>
</dbReference>
<dbReference type="Gene3D" id="1.10.357.140">
    <property type="entry name" value="UbiA prenyltransferase"/>
    <property type="match status" value="1"/>
</dbReference>
<dbReference type="HAMAP" id="MF_00154">
    <property type="entry name" value="CyoE_CtaB"/>
    <property type="match status" value="1"/>
</dbReference>
<dbReference type="InterPro" id="IPR006369">
    <property type="entry name" value="Protohaem_IX_farnesylTrfase"/>
</dbReference>
<dbReference type="InterPro" id="IPR000537">
    <property type="entry name" value="UbiA_prenyltransferase"/>
</dbReference>
<dbReference type="InterPro" id="IPR030470">
    <property type="entry name" value="UbiA_prenylTrfase_CS"/>
</dbReference>
<dbReference type="InterPro" id="IPR044878">
    <property type="entry name" value="UbiA_sf"/>
</dbReference>
<dbReference type="NCBIfam" id="TIGR01473">
    <property type="entry name" value="cyoE_ctaB"/>
    <property type="match status" value="1"/>
</dbReference>
<dbReference type="NCBIfam" id="NF003349">
    <property type="entry name" value="PRK04375.1-2"/>
    <property type="match status" value="1"/>
</dbReference>
<dbReference type="PANTHER" id="PTHR43448:SF7">
    <property type="entry name" value="4-HYDROXYBENZOATE SOLANESYLTRANSFERASE"/>
    <property type="match status" value="1"/>
</dbReference>
<dbReference type="PANTHER" id="PTHR43448">
    <property type="entry name" value="PROTOHEME IX FARNESYLTRANSFERASE, MITOCHONDRIAL"/>
    <property type="match status" value="1"/>
</dbReference>
<dbReference type="Pfam" id="PF01040">
    <property type="entry name" value="UbiA"/>
    <property type="match status" value="1"/>
</dbReference>
<dbReference type="PROSITE" id="PS00943">
    <property type="entry name" value="UBIA"/>
    <property type="match status" value="1"/>
</dbReference>